<proteinExistence type="inferred from homology"/>
<organism>
    <name type="scientific">Schizosaccharomyces pombe (strain 972 / ATCC 24843)</name>
    <name type="common">Fission yeast</name>
    <dbReference type="NCBI Taxonomy" id="284812"/>
    <lineage>
        <taxon>Eukaryota</taxon>
        <taxon>Fungi</taxon>
        <taxon>Dikarya</taxon>
        <taxon>Ascomycota</taxon>
        <taxon>Taphrinomycotina</taxon>
        <taxon>Schizosaccharomycetes</taxon>
        <taxon>Schizosaccharomycetales</taxon>
        <taxon>Schizosaccharomycetaceae</taxon>
        <taxon>Schizosaccharomyces</taxon>
    </lineage>
</organism>
<dbReference type="EC" id="3.4.17.-"/>
<dbReference type="EMBL" id="CU329670">
    <property type="protein sequence ID" value="CAB11265.1"/>
    <property type="molecule type" value="Genomic_DNA"/>
</dbReference>
<dbReference type="PIR" id="T38349">
    <property type="entry name" value="T38349"/>
</dbReference>
<dbReference type="RefSeq" id="NP_594033.1">
    <property type="nucleotide sequence ID" value="NM_001019458.2"/>
</dbReference>
<dbReference type="SMR" id="O13968"/>
<dbReference type="BioGRID" id="278054">
    <property type="interactions" value="2"/>
</dbReference>
<dbReference type="FunCoup" id="O13968">
    <property type="interactions" value="12"/>
</dbReference>
<dbReference type="STRING" id="284812.O13968"/>
<dbReference type="iPTMnet" id="O13968"/>
<dbReference type="PaxDb" id="4896-SPAC24C9.08.1"/>
<dbReference type="EnsemblFungi" id="SPAC24C9.08.1">
    <property type="protein sequence ID" value="SPAC24C9.08.1:pep"/>
    <property type="gene ID" value="SPAC24C9.08"/>
</dbReference>
<dbReference type="PomBase" id="SPAC24C9.08"/>
<dbReference type="VEuPathDB" id="FungiDB:SPAC24C9.08"/>
<dbReference type="eggNOG" id="KOG2275">
    <property type="taxonomic scope" value="Eukaryota"/>
</dbReference>
<dbReference type="HOGENOM" id="CLU_021802_11_0_1"/>
<dbReference type="InParanoid" id="O13968"/>
<dbReference type="OMA" id="DWTHHPF"/>
<dbReference type="PhylomeDB" id="O13968"/>
<dbReference type="Reactome" id="R-SPO-9673163">
    <property type="pathway name" value="Oleoyl-phe metabolism"/>
</dbReference>
<dbReference type="PRO" id="PR:O13968"/>
<dbReference type="Proteomes" id="UP000002485">
    <property type="component" value="Chromosome I"/>
</dbReference>
<dbReference type="GO" id="GO:0000324">
    <property type="term" value="C:fungal-type vacuole"/>
    <property type="evidence" value="ECO:0007005"/>
    <property type="project" value="PomBase"/>
</dbReference>
<dbReference type="GO" id="GO:0000328">
    <property type="term" value="C:fungal-type vacuole lumen"/>
    <property type="evidence" value="ECO:0000318"/>
    <property type="project" value="GO_Central"/>
</dbReference>
<dbReference type="GO" id="GO:0005774">
    <property type="term" value="C:vacuolar membrane"/>
    <property type="evidence" value="ECO:0007669"/>
    <property type="project" value="UniProtKB-SubCell"/>
</dbReference>
<dbReference type="GO" id="GO:0004180">
    <property type="term" value="F:carboxypeptidase activity"/>
    <property type="evidence" value="ECO:0000318"/>
    <property type="project" value="GO_Central"/>
</dbReference>
<dbReference type="GO" id="GO:0046872">
    <property type="term" value="F:metal ion binding"/>
    <property type="evidence" value="ECO:0007669"/>
    <property type="project" value="UniProtKB-KW"/>
</dbReference>
<dbReference type="GO" id="GO:0004181">
    <property type="term" value="F:metallocarboxypeptidase activity"/>
    <property type="evidence" value="ECO:0007669"/>
    <property type="project" value="InterPro"/>
</dbReference>
<dbReference type="GO" id="GO:0007039">
    <property type="term" value="P:protein catabolic process in the vacuole"/>
    <property type="evidence" value="ECO:0000303"/>
    <property type="project" value="PomBase"/>
</dbReference>
<dbReference type="GO" id="GO:0051603">
    <property type="term" value="P:proteolysis involved in protein catabolic process"/>
    <property type="evidence" value="ECO:0000318"/>
    <property type="project" value="GO_Central"/>
</dbReference>
<dbReference type="CDD" id="cd05674">
    <property type="entry name" value="M20_yscS"/>
    <property type="match status" value="1"/>
</dbReference>
<dbReference type="FunFam" id="1.10.150.900:FF:000003">
    <property type="entry name" value="N-fatty-acyl-amino acid synthase/hydrolase PM20D1"/>
    <property type="match status" value="1"/>
</dbReference>
<dbReference type="FunFam" id="3.40.630.10:FF:000027">
    <property type="entry name" value="N-fatty-acyl-amino acid synthase/hydrolase PM20D1"/>
    <property type="match status" value="1"/>
</dbReference>
<dbReference type="Gene3D" id="1.10.150.900">
    <property type="match status" value="1"/>
</dbReference>
<dbReference type="Gene3D" id="3.30.70.360">
    <property type="match status" value="1"/>
</dbReference>
<dbReference type="Gene3D" id="3.40.630.10">
    <property type="entry name" value="Zn peptidases"/>
    <property type="match status" value="1"/>
</dbReference>
<dbReference type="InterPro" id="IPR036264">
    <property type="entry name" value="Bact_exopeptidase_dim_dom"/>
</dbReference>
<dbReference type="InterPro" id="IPR017141">
    <property type="entry name" value="Pept_M20_carboxypep"/>
</dbReference>
<dbReference type="InterPro" id="IPR047177">
    <property type="entry name" value="Pept_M20A"/>
</dbReference>
<dbReference type="InterPro" id="IPR002933">
    <property type="entry name" value="Peptidase_M20"/>
</dbReference>
<dbReference type="InterPro" id="IPR011650">
    <property type="entry name" value="Peptidase_M20_dimer"/>
</dbReference>
<dbReference type="PANTHER" id="PTHR45962">
    <property type="entry name" value="N-FATTY-ACYL-AMINO ACID SYNTHASE/HYDROLASE PM20D1"/>
    <property type="match status" value="1"/>
</dbReference>
<dbReference type="PANTHER" id="PTHR45962:SF1">
    <property type="entry name" value="N-FATTY-ACYL-AMINO ACID SYNTHASE_HYDROLASE PM20D1"/>
    <property type="match status" value="1"/>
</dbReference>
<dbReference type="Pfam" id="PF07687">
    <property type="entry name" value="M20_dimer"/>
    <property type="match status" value="1"/>
</dbReference>
<dbReference type="Pfam" id="PF01546">
    <property type="entry name" value="Peptidase_M20"/>
    <property type="match status" value="1"/>
</dbReference>
<dbReference type="PIRSF" id="PIRSF037217">
    <property type="entry name" value="Carboxypeptidase_S"/>
    <property type="match status" value="1"/>
</dbReference>
<dbReference type="SUPFAM" id="SSF55031">
    <property type="entry name" value="Bacterial exopeptidase dimerisation domain"/>
    <property type="match status" value="1"/>
</dbReference>
<dbReference type="SUPFAM" id="SSF53187">
    <property type="entry name" value="Zn-dependent exopeptidases"/>
    <property type="match status" value="1"/>
</dbReference>
<sequence>MSTSNDPVVSSHDPIKQEKEQETDLEAQVEHKKRNERGNAFVGFLILIFVYYLLRGGSNDNDKQEMSHSPGSCMDSESAAVSTSAKCYIPPVLTPAKEPKLGDDVSGIDYIRSPEFFNDSLVRFQELLRIPTVCYDDMGDVGDDDRFDIFAVFQDKVRELYPNIFKKLKVEYVNTYGLLITLEGSNKDLKPLVLMGHQDVVPVNQASLDRWYFPPFSATYHNGHVYSRGAADDKNSVVAILEALEILAISDYKPEQTVIASFGFDEEVSGYRGALPLAHKLYERYGKDGVALILDEGGFTINLFGTLFATVCVAEKGYMDVHLKLKTPGGHASIPPPHTNIGLMSKLVTQIEEPFGGELTFENPFYTTLQCFAENSADMDDNLRQLIKSGDTEKMTDLFSKSRLYRYFFETSIAVDVINGGVKVNALPEETTLAVNHRVDASKGLKQVYDRYGGLLEEFGHEYHVNVTLFNGETVVEYEDAIGHIFASTAKTLEPSPVSPYDESSDAYKKLAGAIRYTFGDGTSVTPALMPANTDTRHYWNLTSNIYRWTPVSTNSTSKNSFNGHTINENMRYDAHMDSIEFFYNFILVSDSGEEA</sequence>
<comment type="cofactor">
    <cofactor evidence="1">
        <name>Zn(2+)</name>
        <dbReference type="ChEBI" id="CHEBI:29105"/>
    </cofactor>
    <text evidence="1">Binds 2 Zn(2+) ions per subunit.</text>
</comment>
<comment type="subcellular location">
    <subcellularLocation>
        <location evidence="4">Vacuole membrane</location>
        <topology evidence="4">Single-pass membrane protein</topology>
    </subcellularLocation>
</comment>
<comment type="similarity">
    <text evidence="5">Belongs to the peptidase M20A family.</text>
</comment>
<keyword id="KW-0121">Carboxypeptidase</keyword>
<keyword id="KW-0325">Glycoprotein</keyword>
<keyword id="KW-0378">Hydrolase</keyword>
<keyword id="KW-0472">Membrane</keyword>
<keyword id="KW-0479">Metal-binding</keyword>
<keyword id="KW-0645">Protease</keyword>
<keyword id="KW-1185">Reference proteome</keyword>
<keyword id="KW-0812">Transmembrane</keyword>
<keyword id="KW-1133">Transmembrane helix</keyword>
<keyword id="KW-0926">Vacuole</keyword>
<keyword id="KW-0862">Zinc</keyword>
<protein>
    <recommendedName>
        <fullName>Uncharacterized carboxypeptidase C24C9.08</fullName>
        <ecNumber>3.4.17.-</ecNumber>
    </recommendedName>
</protein>
<name>YE48_SCHPO</name>
<evidence type="ECO:0000250" key="1"/>
<evidence type="ECO:0000255" key="2"/>
<evidence type="ECO:0000256" key="3">
    <source>
        <dbReference type="SAM" id="MobiDB-lite"/>
    </source>
</evidence>
<evidence type="ECO:0000269" key="4">
    <source>
    </source>
</evidence>
<evidence type="ECO:0000305" key="5"/>
<feature type="chain" id="PRO_0000317321" description="Uncharacterized carboxypeptidase C24C9.08">
    <location>
        <begin position="1"/>
        <end position="596"/>
    </location>
</feature>
<feature type="topological domain" description="Cytoplasmic" evidence="2">
    <location>
        <begin position="1"/>
        <end position="37"/>
    </location>
</feature>
<feature type="transmembrane region" description="Helical" evidence="2">
    <location>
        <begin position="38"/>
        <end position="58"/>
    </location>
</feature>
<feature type="topological domain" description="Lumenal" evidence="2">
    <location>
        <begin position="59"/>
        <end position="596"/>
    </location>
</feature>
<feature type="region of interest" description="Disordered" evidence="3">
    <location>
        <begin position="1"/>
        <end position="31"/>
    </location>
</feature>
<feature type="compositionally biased region" description="Basic and acidic residues" evidence="3">
    <location>
        <begin position="13"/>
        <end position="22"/>
    </location>
</feature>
<feature type="active site" evidence="1">
    <location>
        <position position="199"/>
    </location>
</feature>
<feature type="active site" description="Proton acceptor" evidence="1">
    <location>
        <position position="266"/>
    </location>
</feature>
<feature type="binding site" evidence="1">
    <location>
        <position position="197"/>
    </location>
    <ligand>
        <name>Zn(2+)</name>
        <dbReference type="ChEBI" id="CHEBI:29105"/>
        <label>2</label>
    </ligand>
</feature>
<feature type="binding site" evidence="1">
    <location>
        <position position="232"/>
    </location>
    <ligand>
        <name>Zn(2+)</name>
        <dbReference type="ChEBI" id="CHEBI:29105"/>
        <label>1</label>
    </ligand>
</feature>
<feature type="binding site" evidence="1">
    <location>
        <position position="232"/>
    </location>
    <ligand>
        <name>Zn(2+)</name>
        <dbReference type="ChEBI" id="CHEBI:29105"/>
        <label>2</label>
    </ligand>
</feature>
<feature type="binding site" evidence="1">
    <location>
        <position position="267"/>
    </location>
    <ligand>
        <name>Zn(2+)</name>
        <dbReference type="ChEBI" id="CHEBI:29105"/>
        <label>1</label>
    </ligand>
</feature>
<feature type="binding site" evidence="1">
    <location>
        <position position="295"/>
    </location>
    <ligand>
        <name>Zn(2+)</name>
        <dbReference type="ChEBI" id="CHEBI:29105"/>
        <label>2</label>
    </ligand>
</feature>
<feature type="binding site" evidence="1">
    <location>
        <position position="565"/>
    </location>
    <ligand>
        <name>Zn(2+)</name>
        <dbReference type="ChEBI" id="CHEBI:29105"/>
        <label>1</label>
    </ligand>
</feature>
<feature type="glycosylation site" description="N-linked (GlcNAc...) asparagine" evidence="2">
    <location>
        <position position="118"/>
    </location>
</feature>
<feature type="glycosylation site" description="N-linked (GlcNAc...) asparagine" evidence="2">
    <location>
        <position position="466"/>
    </location>
</feature>
<feature type="glycosylation site" description="N-linked (GlcNAc...) asparagine" evidence="2">
    <location>
        <position position="541"/>
    </location>
</feature>
<feature type="glycosylation site" description="N-linked (GlcNAc...) asparagine" evidence="2">
    <location>
        <position position="555"/>
    </location>
</feature>
<gene>
    <name type="ORF">SPAC24C9.08</name>
</gene>
<accession>O13968</accession>
<reference key="1">
    <citation type="journal article" date="2002" name="Nature">
        <title>The genome sequence of Schizosaccharomyces pombe.</title>
        <authorList>
            <person name="Wood V."/>
            <person name="Gwilliam R."/>
            <person name="Rajandream M.A."/>
            <person name="Lyne M.H."/>
            <person name="Lyne R."/>
            <person name="Stewart A."/>
            <person name="Sgouros J.G."/>
            <person name="Peat N."/>
            <person name="Hayles J."/>
            <person name="Baker S.G."/>
            <person name="Basham D."/>
            <person name="Bowman S."/>
            <person name="Brooks K."/>
            <person name="Brown D."/>
            <person name="Brown S."/>
            <person name="Chillingworth T."/>
            <person name="Churcher C.M."/>
            <person name="Collins M."/>
            <person name="Connor R."/>
            <person name="Cronin A."/>
            <person name="Davis P."/>
            <person name="Feltwell T."/>
            <person name="Fraser A."/>
            <person name="Gentles S."/>
            <person name="Goble A."/>
            <person name="Hamlin N."/>
            <person name="Harris D.E."/>
            <person name="Hidalgo J."/>
            <person name="Hodgson G."/>
            <person name="Holroyd S."/>
            <person name="Hornsby T."/>
            <person name="Howarth S."/>
            <person name="Huckle E.J."/>
            <person name="Hunt S."/>
            <person name="Jagels K."/>
            <person name="James K.D."/>
            <person name="Jones L."/>
            <person name="Jones M."/>
            <person name="Leather S."/>
            <person name="McDonald S."/>
            <person name="McLean J."/>
            <person name="Mooney P."/>
            <person name="Moule S."/>
            <person name="Mungall K.L."/>
            <person name="Murphy L.D."/>
            <person name="Niblett D."/>
            <person name="Odell C."/>
            <person name="Oliver K."/>
            <person name="O'Neil S."/>
            <person name="Pearson D."/>
            <person name="Quail M.A."/>
            <person name="Rabbinowitsch E."/>
            <person name="Rutherford K.M."/>
            <person name="Rutter S."/>
            <person name="Saunders D."/>
            <person name="Seeger K."/>
            <person name="Sharp S."/>
            <person name="Skelton J."/>
            <person name="Simmonds M.N."/>
            <person name="Squares R."/>
            <person name="Squares S."/>
            <person name="Stevens K."/>
            <person name="Taylor K."/>
            <person name="Taylor R.G."/>
            <person name="Tivey A."/>
            <person name="Walsh S.V."/>
            <person name="Warren T."/>
            <person name="Whitehead S."/>
            <person name="Woodward J.R."/>
            <person name="Volckaert G."/>
            <person name="Aert R."/>
            <person name="Robben J."/>
            <person name="Grymonprez B."/>
            <person name="Weltjens I."/>
            <person name="Vanstreels E."/>
            <person name="Rieger M."/>
            <person name="Schaefer M."/>
            <person name="Mueller-Auer S."/>
            <person name="Gabel C."/>
            <person name="Fuchs M."/>
            <person name="Duesterhoeft A."/>
            <person name="Fritzc C."/>
            <person name="Holzer E."/>
            <person name="Moestl D."/>
            <person name="Hilbert H."/>
            <person name="Borzym K."/>
            <person name="Langer I."/>
            <person name="Beck A."/>
            <person name="Lehrach H."/>
            <person name="Reinhardt R."/>
            <person name="Pohl T.M."/>
            <person name="Eger P."/>
            <person name="Zimmermann W."/>
            <person name="Wedler H."/>
            <person name="Wambutt R."/>
            <person name="Purnelle B."/>
            <person name="Goffeau A."/>
            <person name="Cadieu E."/>
            <person name="Dreano S."/>
            <person name="Gloux S."/>
            <person name="Lelaure V."/>
            <person name="Mottier S."/>
            <person name="Galibert F."/>
            <person name="Aves S.J."/>
            <person name="Xiang Z."/>
            <person name="Hunt C."/>
            <person name="Moore K."/>
            <person name="Hurst S.M."/>
            <person name="Lucas M."/>
            <person name="Rochet M."/>
            <person name="Gaillardin C."/>
            <person name="Tallada V.A."/>
            <person name="Garzon A."/>
            <person name="Thode G."/>
            <person name="Daga R.R."/>
            <person name="Cruzado L."/>
            <person name="Jimenez J."/>
            <person name="Sanchez M."/>
            <person name="del Rey F."/>
            <person name="Benito J."/>
            <person name="Dominguez A."/>
            <person name="Revuelta J.L."/>
            <person name="Moreno S."/>
            <person name="Armstrong J."/>
            <person name="Forsburg S.L."/>
            <person name="Cerutti L."/>
            <person name="Lowe T."/>
            <person name="McCombie W.R."/>
            <person name="Paulsen I."/>
            <person name="Potashkin J."/>
            <person name="Shpakovski G.V."/>
            <person name="Ussery D."/>
            <person name="Barrell B.G."/>
            <person name="Nurse P."/>
        </authorList>
    </citation>
    <scope>NUCLEOTIDE SEQUENCE [LARGE SCALE GENOMIC DNA]</scope>
    <source>
        <strain>972 / ATCC 24843</strain>
    </source>
</reference>
<reference key="2">
    <citation type="journal article" date="2006" name="Nat. Biotechnol.">
        <title>ORFeome cloning and global analysis of protein localization in the fission yeast Schizosaccharomyces pombe.</title>
        <authorList>
            <person name="Matsuyama A."/>
            <person name="Arai R."/>
            <person name="Yashiroda Y."/>
            <person name="Shirai A."/>
            <person name="Kamata A."/>
            <person name="Sekido S."/>
            <person name="Kobayashi Y."/>
            <person name="Hashimoto A."/>
            <person name="Hamamoto M."/>
            <person name="Hiraoka Y."/>
            <person name="Horinouchi S."/>
            <person name="Yoshida M."/>
        </authorList>
    </citation>
    <scope>SUBCELLULAR LOCATION [LARGE SCALE ANALYSIS]</scope>
</reference>